<sequence>MSPLIVGTLIIILLSGLATAFYVTWQGRLICAGVGLILEQAYEGGQMFNTLMAHCFETYNGVEKSGTQCVADWLKVGLLAVTFGAGGPRLVNTLGGSSPTTKRVIYIVMILLVLITLAVNLKH</sequence>
<reference key="1">
    <citation type="journal article" date="2002" name="Nature">
        <title>The genome sequence of Schizosaccharomyces pombe.</title>
        <authorList>
            <person name="Wood V."/>
            <person name="Gwilliam R."/>
            <person name="Rajandream M.A."/>
            <person name="Lyne M.H."/>
            <person name="Lyne R."/>
            <person name="Stewart A."/>
            <person name="Sgouros J.G."/>
            <person name="Peat N."/>
            <person name="Hayles J."/>
            <person name="Baker S.G."/>
            <person name="Basham D."/>
            <person name="Bowman S."/>
            <person name="Brooks K."/>
            <person name="Brown D."/>
            <person name="Brown S."/>
            <person name="Chillingworth T."/>
            <person name="Churcher C.M."/>
            <person name="Collins M."/>
            <person name="Connor R."/>
            <person name="Cronin A."/>
            <person name="Davis P."/>
            <person name="Feltwell T."/>
            <person name="Fraser A."/>
            <person name="Gentles S."/>
            <person name="Goble A."/>
            <person name="Hamlin N."/>
            <person name="Harris D.E."/>
            <person name="Hidalgo J."/>
            <person name="Hodgson G."/>
            <person name="Holroyd S."/>
            <person name="Hornsby T."/>
            <person name="Howarth S."/>
            <person name="Huckle E.J."/>
            <person name="Hunt S."/>
            <person name="Jagels K."/>
            <person name="James K.D."/>
            <person name="Jones L."/>
            <person name="Jones M."/>
            <person name="Leather S."/>
            <person name="McDonald S."/>
            <person name="McLean J."/>
            <person name="Mooney P."/>
            <person name="Moule S."/>
            <person name="Mungall K.L."/>
            <person name="Murphy L.D."/>
            <person name="Niblett D."/>
            <person name="Odell C."/>
            <person name="Oliver K."/>
            <person name="O'Neil S."/>
            <person name="Pearson D."/>
            <person name="Quail M.A."/>
            <person name="Rabbinowitsch E."/>
            <person name="Rutherford K.M."/>
            <person name="Rutter S."/>
            <person name="Saunders D."/>
            <person name="Seeger K."/>
            <person name="Sharp S."/>
            <person name="Skelton J."/>
            <person name="Simmonds M.N."/>
            <person name="Squares R."/>
            <person name="Squares S."/>
            <person name="Stevens K."/>
            <person name="Taylor K."/>
            <person name="Taylor R.G."/>
            <person name="Tivey A."/>
            <person name="Walsh S.V."/>
            <person name="Warren T."/>
            <person name="Whitehead S."/>
            <person name="Woodward J.R."/>
            <person name="Volckaert G."/>
            <person name="Aert R."/>
            <person name="Robben J."/>
            <person name="Grymonprez B."/>
            <person name="Weltjens I."/>
            <person name="Vanstreels E."/>
            <person name="Rieger M."/>
            <person name="Schaefer M."/>
            <person name="Mueller-Auer S."/>
            <person name="Gabel C."/>
            <person name="Fuchs M."/>
            <person name="Duesterhoeft A."/>
            <person name="Fritzc C."/>
            <person name="Holzer E."/>
            <person name="Moestl D."/>
            <person name="Hilbert H."/>
            <person name="Borzym K."/>
            <person name="Langer I."/>
            <person name="Beck A."/>
            <person name="Lehrach H."/>
            <person name="Reinhardt R."/>
            <person name="Pohl T.M."/>
            <person name="Eger P."/>
            <person name="Zimmermann W."/>
            <person name="Wedler H."/>
            <person name="Wambutt R."/>
            <person name="Purnelle B."/>
            <person name="Goffeau A."/>
            <person name="Cadieu E."/>
            <person name="Dreano S."/>
            <person name="Gloux S."/>
            <person name="Lelaure V."/>
            <person name="Mottier S."/>
            <person name="Galibert F."/>
            <person name="Aves S.J."/>
            <person name="Xiang Z."/>
            <person name="Hunt C."/>
            <person name="Moore K."/>
            <person name="Hurst S.M."/>
            <person name="Lucas M."/>
            <person name="Rochet M."/>
            <person name="Gaillardin C."/>
            <person name="Tallada V.A."/>
            <person name="Garzon A."/>
            <person name="Thode G."/>
            <person name="Daga R.R."/>
            <person name="Cruzado L."/>
            <person name="Jimenez J."/>
            <person name="Sanchez M."/>
            <person name="del Rey F."/>
            <person name="Benito J."/>
            <person name="Dominguez A."/>
            <person name="Revuelta J.L."/>
            <person name="Moreno S."/>
            <person name="Armstrong J."/>
            <person name="Forsburg S.L."/>
            <person name="Cerutti L."/>
            <person name="Lowe T."/>
            <person name="McCombie W.R."/>
            <person name="Paulsen I."/>
            <person name="Potashkin J."/>
            <person name="Shpakovski G.V."/>
            <person name="Ussery D."/>
            <person name="Barrell B.G."/>
            <person name="Nurse P."/>
        </authorList>
    </citation>
    <scope>NUCLEOTIDE SEQUENCE [LARGE SCALE GENOMIC DNA]</scope>
    <source>
        <strain>972 / ATCC 24843</strain>
    </source>
</reference>
<reference key="2">
    <citation type="journal article" date="2011" name="Science">
        <title>Comparative functional genomics of the fission yeasts.</title>
        <authorList>
            <person name="Rhind N."/>
            <person name="Chen Z."/>
            <person name="Yassour M."/>
            <person name="Thompson D.A."/>
            <person name="Haas B.J."/>
            <person name="Habib N."/>
            <person name="Wapinski I."/>
            <person name="Roy S."/>
            <person name="Lin M.F."/>
            <person name="Heiman D.I."/>
            <person name="Young S.K."/>
            <person name="Furuya K."/>
            <person name="Guo Y."/>
            <person name="Pidoux A."/>
            <person name="Chen H.M."/>
            <person name="Robbertse B."/>
            <person name="Goldberg J.M."/>
            <person name="Aoki K."/>
            <person name="Bayne E.H."/>
            <person name="Berlin A.M."/>
            <person name="Desjardins C.A."/>
            <person name="Dobbs E."/>
            <person name="Dukaj L."/>
            <person name="Fan L."/>
            <person name="FitzGerald M.G."/>
            <person name="French C."/>
            <person name="Gujja S."/>
            <person name="Hansen K."/>
            <person name="Keifenheim D."/>
            <person name="Levin J.Z."/>
            <person name="Mosher R.A."/>
            <person name="Mueller C.A."/>
            <person name="Pfiffner J."/>
            <person name="Priest M."/>
            <person name="Russ C."/>
            <person name="Smialowska A."/>
            <person name="Swoboda P."/>
            <person name="Sykes S.M."/>
            <person name="Vaughn M."/>
            <person name="Vengrova S."/>
            <person name="Yoder R."/>
            <person name="Zeng Q."/>
            <person name="Allshire R."/>
            <person name="Baulcombe D."/>
            <person name="Birren B.W."/>
            <person name="Brown W."/>
            <person name="Ekwall K."/>
            <person name="Kellis M."/>
            <person name="Leatherwood J."/>
            <person name="Levin H."/>
            <person name="Margalit H."/>
            <person name="Martienssen R."/>
            <person name="Nieduszynski C.A."/>
            <person name="Spatafora J.W."/>
            <person name="Friedman N."/>
            <person name="Dalgaard J.Z."/>
            <person name="Baumann P."/>
            <person name="Niki H."/>
            <person name="Regev A."/>
            <person name="Nusbaum C."/>
        </authorList>
    </citation>
    <scope>REVISION OF GENE MODEL</scope>
</reference>
<accession>C6Y4B5</accession>
<keyword id="KW-1003">Cell membrane</keyword>
<keyword id="KW-0325">Glycoprotein</keyword>
<keyword id="KW-0336">GPI-anchor</keyword>
<keyword id="KW-0449">Lipoprotein</keyword>
<keyword id="KW-0472">Membrane</keyword>
<keyword id="KW-1185">Reference proteome</keyword>
<keyword id="KW-0732">Signal</keyword>
<organism>
    <name type="scientific">Schizosaccharomyces pombe (strain 972 / ATCC 24843)</name>
    <name type="common">Fission yeast</name>
    <dbReference type="NCBI Taxonomy" id="284812"/>
    <lineage>
        <taxon>Eukaryota</taxon>
        <taxon>Fungi</taxon>
        <taxon>Dikarya</taxon>
        <taxon>Ascomycota</taxon>
        <taxon>Taphrinomycotina</taxon>
        <taxon>Schizosaccharomycetes</taxon>
        <taxon>Schizosaccharomycetales</taxon>
        <taxon>Schizosaccharomycetaceae</taxon>
        <taxon>Schizosaccharomyces</taxon>
    </lineage>
</organism>
<protein>
    <recommendedName>
        <fullName>Uncharacterized GPI-anchored protein SPAC212.12</fullName>
    </recommendedName>
</protein>
<name>YM0C_SCHPO</name>
<evidence type="ECO:0000255" key="1"/>
<evidence type="ECO:0000305" key="2"/>
<comment type="subcellular location">
    <subcellularLocation>
        <location evidence="2">Cell membrane</location>
        <topology evidence="2">Lipid-anchor</topology>
        <topology evidence="2">GPI-anchor</topology>
    </subcellularLocation>
</comment>
<dbReference type="EMBL" id="CU329670">
    <property type="protein sequence ID" value="CBA11488.2"/>
    <property type="molecule type" value="Genomic_DNA"/>
</dbReference>
<dbReference type="RefSeq" id="NP_595033.1">
    <property type="nucleotide sequence ID" value="NM_001020463.1"/>
</dbReference>
<dbReference type="RefSeq" id="XP_004001757.1">
    <property type="nucleotide sequence ID" value="XM_004001708.1"/>
</dbReference>
<dbReference type="SMR" id="C6Y4B5"/>
<dbReference type="BioGRID" id="1028617">
    <property type="interactions" value="3"/>
</dbReference>
<dbReference type="BioGRID" id="279164">
    <property type="interactions" value="3"/>
</dbReference>
<dbReference type="STRING" id="284812.C6Y4B5"/>
<dbReference type="EnsemblFungi" id="SPAC212.12.1">
    <property type="protein sequence ID" value="SPAC212.12.1:pep"/>
    <property type="gene ID" value="SPAC212.12"/>
</dbReference>
<dbReference type="EnsemblFungi" id="SPAC750.07c.1">
    <property type="protein sequence ID" value="SPAC750.07c.1:pep"/>
    <property type="gene ID" value="SPAC750.07c"/>
</dbReference>
<dbReference type="KEGG" id="spo:2542711"/>
<dbReference type="PomBase" id="SPAC212.12"/>
<dbReference type="VEuPathDB" id="FungiDB:SPAC212.12"/>
<dbReference type="VEuPathDB" id="FungiDB:SPAC750.07c"/>
<dbReference type="HOGENOM" id="CLU_2016536_0_0_1"/>
<dbReference type="InParanoid" id="C6Y4B5"/>
<dbReference type="PRO" id="PR:C6Y4B5"/>
<dbReference type="Proteomes" id="UP000002485">
    <property type="component" value="Chromosome I"/>
</dbReference>
<dbReference type="GO" id="GO:0009897">
    <property type="term" value="C:external side of plasma membrane"/>
    <property type="evidence" value="ECO:0000303"/>
    <property type="project" value="PomBase"/>
</dbReference>
<feature type="signal peptide" evidence="1">
    <location>
        <begin position="1"/>
        <end position="20"/>
    </location>
</feature>
<feature type="chain" id="PRO_0000429008" description="Uncharacterized GPI-anchored protein SPAC212.12">
    <location>
        <begin position="21"/>
        <end position="96"/>
    </location>
</feature>
<feature type="propeptide" id="PRO_0000429009" description="Removed in mature form" evidence="1">
    <location>
        <begin position="97"/>
        <end position="123"/>
    </location>
</feature>
<feature type="lipid moiety-binding region" description="GPI-anchor amidated glycine" evidence="1">
    <location>
        <position position="96"/>
    </location>
</feature>
<proteinExistence type="inferred from homology"/>
<gene>
    <name type="ORF">SPAC212.12</name>
</gene>